<organism>
    <name type="scientific">Desulforudis audaxviator (strain MP104C)</name>
    <dbReference type="NCBI Taxonomy" id="477974"/>
    <lineage>
        <taxon>Bacteria</taxon>
        <taxon>Bacillati</taxon>
        <taxon>Bacillota</taxon>
        <taxon>Clostridia</taxon>
        <taxon>Thermoanaerobacterales</taxon>
        <taxon>Candidatus Desulforudaceae</taxon>
        <taxon>Candidatus Desulforudis</taxon>
    </lineage>
</organism>
<feature type="chain" id="PRO_0000383235" description="Nucleotide-binding protein Daud_0300">
    <location>
        <begin position="1"/>
        <end position="294"/>
    </location>
</feature>
<feature type="binding site" evidence="1">
    <location>
        <begin position="11"/>
        <end position="18"/>
    </location>
    <ligand>
        <name>ATP</name>
        <dbReference type="ChEBI" id="CHEBI:30616"/>
    </ligand>
</feature>
<feature type="binding site" evidence="1">
    <location>
        <begin position="62"/>
        <end position="65"/>
    </location>
    <ligand>
        <name>GTP</name>
        <dbReference type="ChEBI" id="CHEBI:37565"/>
    </ligand>
</feature>
<dbReference type="EMBL" id="CP000860">
    <property type="protein sequence ID" value="ACA58861.1"/>
    <property type="molecule type" value="Genomic_DNA"/>
</dbReference>
<dbReference type="RefSeq" id="WP_012301453.1">
    <property type="nucleotide sequence ID" value="NC_010424.1"/>
</dbReference>
<dbReference type="SMR" id="B1I0X4"/>
<dbReference type="STRING" id="477974.Daud_0300"/>
<dbReference type="KEGG" id="dau:Daud_0300"/>
<dbReference type="eggNOG" id="COG1660">
    <property type="taxonomic scope" value="Bacteria"/>
</dbReference>
<dbReference type="HOGENOM" id="CLU_059558_0_0_9"/>
<dbReference type="OrthoDB" id="9784461at2"/>
<dbReference type="Proteomes" id="UP000008544">
    <property type="component" value="Chromosome"/>
</dbReference>
<dbReference type="GO" id="GO:0005524">
    <property type="term" value="F:ATP binding"/>
    <property type="evidence" value="ECO:0007669"/>
    <property type="project" value="UniProtKB-UniRule"/>
</dbReference>
<dbReference type="GO" id="GO:0005525">
    <property type="term" value="F:GTP binding"/>
    <property type="evidence" value="ECO:0007669"/>
    <property type="project" value="UniProtKB-UniRule"/>
</dbReference>
<dbReference type="Gene3D" id="3.40.50.300">
    <property type="entry name" value="P-loop containing nucleotide triphosphate hydrolases"/>
    <property type="match status" value="1"/>
</dbReference>
<dbReference type="HAMAP" id="MF_00636">
    <property type="entry name" value="RapZ_like"/>
    <property type="match status" value="1"/>
</dbReference>
<dbReference type="InterPro" id="IPR027417">
    <property type="entry name" value="P-loop_NTPase"/>
</dbReference>
<dbReference type="InterPro" id="IPR005337">
    <property type="entry name" value="RapZ-like"/>
</dbReference>
<dbReference type="InterPro" id="IPR053930">
    <property type="entry name" value="RapZ-like_N"/>
</dbReference>
<dbReference type="InterPro" id="IPR053931">
    <property type="entry name" value="RapZ_C"/>
</dbReference>
<dbReference type="NCBIfam" id="NF003828">
    <property type="entry name" value="PRK05416.1"/>
    <property type="match status" value="1"/>
</dbReference>
<dbReference type="PANTHER" id="PTHR30448">
    <property type="entry name" value="RNASE ADAPTER PROTEIN RAPZ"/>
    <property type="match status" value="1"/>
</dbReference>
<dbReference type="PANTHER" id="PTHR30448:SF0">
    <property type="entry name" value="RNASE ADAPTER PROTEIN RAPZ"/>
    <property type="match status" value="1"/>
</dbReference>
<dbReference type="Pfam" id="PF22740">
    <property type="entry name" value="PapZ_C"/>
    <property type="match status" value="1"/>
</dbReference>
<dbReference type="Pfam" id="PF03668">
    <property type="entry name" value="RapZ-like_N"/>
    <property type="match status" value="1"/>
</dbReference>
<dbReference type="PIRSF" id="PIRSF005052">
    <property type="entry name" value="P-loopkin"/>
    <property type="match status" value="1"/>
</dbReference>
<dbReference type="SUPFAM" id="SSF52540">
    <property type="entry name" value="P-loop containing nucleoside triphosphate hydrolases"/>
    <property type="match status" value="1"/>
</dbReference>
<reference key="1">
    <citation type="submission" date="2007-10" db="EMBL/GenBank/DDBJ databases">
        <title>Complete sequence of chromosome of Desulforudis audaxviator MP104C.</title>
        <authorList>
            <person name="Copeland A."/>
            <person name="Lucas S."/>
            <person name="Lapidus A."/>
            <person name="Barry K."/>
            <person name="Glavina del Rio T."/>
            <person name="Dalin E."/>
            <person name="Tice H."/>
            <person name="Bruce D."/>
            <person name="Pitluck S."/>
            <person name="Lowry S.R."/>
            <person name="Larimer F."/>
            <person name="Land M.L."/>
            <person name="Hauser L."/>
            <person name="Kyrpides N."/>
            <person name="Ivanova N.N."/>
            <person name="Richardson P."/>
        </authorList>
    </citation>
    <scope>NUCLEOTIDE SEQUENCE [LARGE SCALE GENOMIC DNA]</scope>
    <source>
        <strain>MP104C</strain>
    </source>
</reference>
<comment type="function">
    <text evidence="1">Displays ATPase and GTPase activities.</text>
</comment>
<comment type="similarity">
    <text evidence="1">Belongs to the RapZ-like family.</text>
</comment>
<name>Y300_DESAP</name>
<gene>
    <name type="ordered locus">Daud_0300</name>
</gene>
<keyword id="KW-0067">ATP-binding</keyword>
<keyword id="KW-0342">GTP-binding</keyword>
<keyword id="KW-0547">Nucleotide-binding</keyword>
<keyword id="KW-1185">Reference proteome</keyword>
<sequence>MAGTRLLIVTGLSGAGKTQAVRCLEDLGFFCVDNLPPKLIPKFAELCAQTTGKIERIALVVDIRGGEFFATVLDVLKDLKNQGLRYEILYLEASNETLVRRFKESRRPHPLSTSGEIVEGIEAERLALRELRGLAHKIIDTSNFSVAQLKQEIANLYGGNEDRERLAITAVSFGYKYGIPLDADLVIDVRFLPNPHYEPQLQPLTGLDEPVREYVFEAPTTSEFLSHLVNLFDFLIPQYIREGKTTLTLAIGCTGGKHRSVVLADWLGEQLRERKHRIVVRHRDLGRDVSGTNY</sequence>
<protein>
    <recommendedName>
        <fullName evidence="1">Nucleotide-binding protein Daud_0300</fullName>
    </recommendedName>
</protein>
<proteinExistence type="inferred from homology"/>
<evidence type="ECO:0000255" key="1">
    <source>
        <dbReference type="HAMAP-Rule" id="MF_00636"/>
    </source>
</evidence>
<accession>B1I0X4</accession>